<proteinExistence type="inferred from homology"/>
<protein>
    <recommendedName>
        <fullName evidence="1">Pyridoxine/pyridoxamine 5'-phosphate oxidase</fullName>
        <ecNumber evidence="1">1.4.3.5</ecNumber>
    </recommendedName>
    <alternativeName>
        <fullName evidence="1">PNP/PMP oxidase</fullName>
        <shortName evidence="1">PNPOx</shortName>
    </alternativeName>
    <alternativeName>
        <fullName evidence="1">Pyridoxal 5'-phosphate synthase</fullName>
    </alternativeName>
</protein>
<comment type="function">
    <text evidence="1">Catalyzes the oxidation of either pyridoxine 5'-phosphate (PNP) or pyridoxamine 5'-phosphate (PMP) into pyridoxal 5'-phosphate (PLP).</text>
</comment>
<comment type="catalytic activity">
    <reaction evidence="1">
        <text>pyridoxamine 5'-phosphate + O2 + H2O = pyridoxal 5'-phosphate + H2O2 + NH4(+)</text>
        <dbReference type="Rhea" id="RHEA:15817"/>
        <dbReference type="ChEBI" id="CHEBI:15377"/>
        <dbReference type="ChEBI" id="CHEBI:15379"/>
        <dbReference type="ChEBI" id="CHEBI:16240"/>
        <dbReference type="ChEBI" id="CHEBI:28938"/>
        <dbReference type="ChEBI" id="CHEBI:58451"/>
        <dbReference type="ChEBI" id="CHEBI:597326"/>
        <dbReference type="EC" id="1.4.3.5"/>
    </reaction>
</comment>
<comment type="catalytic activity">
    <reaction evidence="1">
        <text>pyridoxine 5'-phosphate + O2 = pyridoxal 5'-phosphate + H2O2</text>
        <dbReference type="Rhea" id="RHEA:15149"/>
        <dbReference type="ChEBI" id="CHEBI:15379"/>
        <dbReference type="ChEBI" id="CHEBI:16240"/>
        <dbReference type="ChEBI" id="CHEBI:58589"/>
        <dbReference type="ChEBI" id="CHEBI:597326"/>
        <dbReference type="EC" id="1.4.3.5"/>
    </reaction>
</comment>
<comment type="cofactor">
    <cofactor evidence="1">
        <name>FMN</name>
        <dbReference type="ChEBI" id="CHEBI:58210"/>
    </cofactor>
    <text evidence="1">Binds 1 FMN per subunit.</text>
</comment>
<comment type="pathway">
    <text evidence="1">Cofactor metabolism; pyridoxal 5'-phosphate salvage; pyridoxal 5'-phosphate from pyridoxamine 5'-phosphate: step 1/1.</text>
</comment>
<comment type="pathway">
    <text evidence="1">Cofactor metabolism; pyridoxal 5'-phosphate salvage; pyridoxal 5'-phosphate from pyridoxine 5'-phosphate: step 1/1.</text>
</comment>
<comment type="subunit">
    <text evidence="1">Homodimer.</text>
</comment>
<comment type="similarity">
    <text evidence="1">Belongs to the pyridoxamine 5'-phosphate oxidase family.</text>
</comment>
<sequence length="214" mass="25160">MDRTIADLRKDYTLEALSEVEVDTNPFRQFKRWFEQALAAQLPEPNAMTIATSTPDGQPSARMVLLKDFDERGFVFFTNYNSRKGQELAENPQAALVFWWAELERQVRISGRVEKVSESESDYYFYSRPANSRLGAWVSNQSEIIASREVLEQRMQEFQHKYENQEIPRPSHWGGLRVIPSQIEFWQGRSSRLHDRLLYTLLNDDSWEIHRLSP</sequence>
<gene>
    <name evidence="1" type="primary">pdxH</name>
    <name type="ordered locus">Ava_0557</name>
</gene>
<accession>Q3MFQ5</accession>
<feature type="chain" id="PRO_0000255850" description="Pyridoxine/pyridoxamine 5'-phosphate oxidase">
    <location>
        <begin position="1"/>
        <end position="214"/>
    </location>
</feature>
<feature type="binding site" evidence="1">
    <location>
        <begin position="9"/>
        <end position="12"/>
    </location>
    <ligand>
        <name>substrate</name>
    </ligand>
</feature>
<feature type="binding site" evidence="1">
    <location>
        <begin position="62"/>
        <end position="67"/>
    </location>
    <ligand>
        <name>FMN</name>
        <dbReference type="ChEBI" id="CHEBI:58210"/>
    </ligand>
</feature>
<feature type="binding site" evidence="1">
    <location>
        <position position="67"/>
    </location>
    <ligand>
        <name>substrate</name>
    </ligand>
</feature>
<feature type="binding site" evidence="1">
    <location>
        <begin position="77"/>
        <end position="78"/>
    </location>
    <ligand>
        <name>FMN</name>
        <dbReference type="ChEBI" id="CHEBI:58210"/>
    </ligand>
</feature>
<feature type="binding site" evidence="1">
    <location>
        <position position="83"/>
    </location>
    <ligand>
        <name>FMN</name>
        <dbReference type="ChEBI" id="CHEBI:58210"/>
    </ligand>
</feature>
<feature type="binding site" evidence="1">
    <location>
        <position position="84"/>
    </location>
    <ligand>
        <name>FMN</name>
        <dbReference type="ChEBI" id="CHEBI:58210"/>
    </ligand>
</feature>
<feature type="binding site" evidence="1">
    <location>
        <position position="106"/>
    </location>
    <ligand>
        <name>FMN</name>
        <dbReference type="ChEBI" id="CHEBI:58210"/>
    </ligand>
</feature>
<feature type="binding site" evidence="1">
    <location>
        <position position="124"/>
    </location>
    <ligand>
        <name>substrate</name>
    </ligand>
</feature>
<feature type="binding site" evidence="1">
    <location>
        <position position="128"/>
    </location>
    <ligand>
        <name>substrate</name>
    </ligand>
</feature>
<feature type="binding site" evidence="1">
    <location>
        <position position="132"/>
    </location>
    <ligand>
        <name>substrate</name>
    </ligand>
</feature>
<feature type="binding site" evidence="1">
    <location>
        <begin position="141"/>
        <end position="142"/>
    </location>
    <ligand>
        <name>FMN</name>
        <dbReference type="ChEBI" id="CHEBI:58210"/>
    </ligand>
</feature>
<feature type="binding site" evidence="1">
    <location>
        <position position="186"/>
    </location>
    <ligand>
        <name>FMN</name>
        <dbReference type="ChEBI" id="CHEBI:58210"/>
    </ligand>
</feature>
<feature type="binding site" evidence="1">
    <location>
        <begin position="192"/>
        <end position="194"/>
    </location>
    <ligand>
        <name>substrate</name>
    </ligand>
</feature>
<feature type="binding site" evidence="1">
    <location>
        <position position="196"/>
    </location>
    <ligand>
        <name>FMN</name>
        <dbReference type="ChEBI" id="CHEBI:58210"/>
    </ligand>
</feature>
<name>PDXH_TRIV2</name>
<dbReference type="EC" id="1.4.3.5" evidence="1"/>
<dbReference type="EMBL" id="CP000117">
    <property type="protein sequence ID" value="ABA20181.1"/>
    <property type="molecule type" value="Genomic_DNA"/>
</dbReference>
<dbReference type="SMR" id="Q3MFQ5"/>
<dbReference type="STRING" id="240292.Ava_0557"/>
<dbReference type="KEGG" id="ava:Ava_0557"/>
<dbReference type="eggNOG" id="COG0259">
    <property type="taxonomic scope" value="Bacteria"/>
</dbReference>
<dbReference type="HOGENOM" id="CLU_032263_2_2_3"/>
<dbReference type="UniPathway" id="UPA01068">
    <property type="reaction ID" value="UER00304"/>
</dbReference>
<dbReference type="UniPathway" id="UPA01068">
    <property type="reaction ID" value="UER00305"/>
</dbReference>
<dbReference type="Proteomes" id="UP000002533">
    <property type="component" value="Chromosome"/>
</dbReference>
<dbReference type="GO" id="GO:0010181">
    <property type="term" value="F:FMN binding"/>
    <property type="evidence" value="ECO:0007669"/>
    <property type="project" value="UniProtKB-UniRule"/>
</dbReference>
<dbReference type="GO" id="GO:0004733">
    <property type="term" value="F:pyridoxamine phosphate oxidase activity"/>
    <property type="evidence" value="ECO:0007669"/>
    <property type="project" value="UniProtKB-UniRule"/>
</dbReference>
<dbReference type="GO" id="GO:0008615">
    <property type="term" value="P:pyridoxine biosynthetic process"/>
    <property type="evidence" value="ECO:0007669"/>
    <property type="project" value="UniProtKB-KW"/>
</dbReference>
<dbReference type="FunFam" id="2.30.110.10:FF:000005">
    <property type="entry name" value="NAD(P)H-hydrate epimerase"/>
    <property type="match status" value="1"/>
</dbReference>
<dbReference type="Gene3D" id="2.30.110.10">
    <property type="entry name" value="Electron Transport, Fmn-binding Protein, Chain A"/>
    <property type="match status" value="1"/>
</dbReference>
<dbReference type="HAMAP" id="MF_01629">
    <property type="entry name" value="PdxH"/>
    <property type="match status" value="1"/>
</dbReference>
<dbReference type="InterPro" id="IPR000659">
    <property type="entry name" value="Pyridox_Oxase"/>
</dbReference>
<dbReference type="InterPro" id="IPR019740">
    <property type="entry name" value="Pyridox_Oxase_CS"/>
</dbReference>
<dbReference type="InterPro" id="IPR011576">
    <property type="entry name" value="Pyridox_Oxase_N"/>
</dbReference>
<dbReference type="InterPro" id="IPR019576">
    <property type="entry name" value="Pyridoxamine_oxidase_dimer_C"/>
</dbReference>
<dbReference type="InterPro" id="IPR012349">
    <property type="entry name" value="Split_barrel_FMN-bd"/>
</dbReference>
<dbReference type="NCBIfam" id="TIGR00558">
    <property type="entry name" value="pdxH"/>
    <property type="match status" value="1"/>
</dbReference>
<dbReference type="NCBIfam" id="NF004231">
    <property type="entry name" value="PRK05679.1"/>
    <property type="match status" value="1"/>
</dbReference>
<dbReference type="PANTHER" id="PTHR10851:SF0">
    <property type="entry name" value="PYRIDOXINE-5'-PHOSPHATE OXIDASE"/>
    <property type="match status" value="1"/>
</dbReference>
<dbReference type="PANTHER" id="PTHR10851">
    <property type="entry name" value="PYRIDOXINE-5-PHOSPHATE OXIDASE"/>
    <property type="match status" value="1"/>
</dbReference>
<dbReference type="Pfam" id="PF10590">
    <property type="entry name" value="PNP_phzG_C"/>
    <property type="match status" value="1"/>
</dbReference>
<dbReference type="Pfam" id="PF01243">
    <property type="entry name" value="PNPOx_N"/>
    <property type="match status" value="1"/>
</dbReference>
<dbReference type="PIRSF" id="PIRSF000190">
    <property type="entry name" value="Pyd_amn-ph_oxd"/>
    <property type="match status" value="1"/>
</dbReference>
<dbReference type="SUPFAM" id="SSF50475">
    <property type="entry name" value="FMN-binding split barrel"/>
    <property type="match status" value="1"/>
</dbReference>
<dbReference type="PROSITE" id="PS01064">
    <property type="entry name" value="PYRIDOX_OXIDASE"/>
    <property type="match status" value="1"/>
</dbReference>
<organism>
    <name type="scientific">Trichormus variabilis (strain ATCC 29413 / PCC 7937)</name>
    <name type="common">Anabaena variabilis</name>
    <dbReference type="NCBI Taxonomy" id="240292"/>
    <lineage>
        <taxon>Bacteria</taxon>
        <taxon>Bacillati</taxon>
        <taxon>Cyanobacteriota</taxon>
        <taxon>Cyanophyceae</taxon>
        <taxon>Nostocales</taxon>
        <taxon>Nostocaceae</taxon>
        <taxon>Trichormus</taxon>
    </lineage>
</organism>
<reference key="1">
    <citation type="journal article" date="2014" name="Stand. Genomic Sci.">
        <title>Complete genome sequence of Anabaena variabilis ATCC 29413.</title>
        <authorList>
            <person name="Thiel T."/>
            <person name="Pratte B.S."/>
            <person name="Zhong J."/>
            <person name="Goodwin L."/>
            <person name="Copeland A."/>
            <person name="Lucas S."/>
            <person name="Han C."/>
            <person name="Pitluck S."/>
            <person name="Land M.L."/>
            <person name="Kyrpides N.C."/>
            <person name="Woyke T."/>
        </authorList>
    </citation>
    <scope>NUCLEOTIDE SEQUENCE [LARGE SCALE GENOMIC DNA]</scope>
    <source>
        <strain>ATCC 29413 / PCC 7937</strain>
    </source>
</reference>
<keyword id="KW-0285">Flavoprotein</keyword>
<keyword id="KW-0288">FMN</keyword>
<keyword id="KW-0560">Oxidoreductase</keyword>
<keyword id="KW-0664">Pyridoxine biosynthesis</keyword>
<evidence type="ECO:0000255" key="1">
    <source>
        <dbReference type="HAMAP-Rule" id="MF_01629"/>
    </source>
</evidence>